<proteinExistence type="inferred from homology"/>
<reference key="1">
    <citation type="journal article" date="2011" name="Science">
        <title>The Selaginella genome identifies genetic changes associated with the evolution of vascular plants.</title>
        <authorList>
            <person name="Banks J.A."/>
            <person name="Nishiyama T."/>
            <person name="Hasebe M."/>
            <person name="Bowman J.L."/>
            <person name="Gribskov M."/>
            <person name="dePamphilis C."/>
            <person name="Albert V.A."/>
            <person name="Aono N."/>
            <person name="Aoyama T."/>
            <person name="Ambrose B.A."/>
            <person name="Ashton N.W."/>
            <person name="Axtell M.J."/>
            <person name="Barker E."/>
            <person name="Barker M.S."/>
            <person name="Bennetzen J.L."/>
            <person name="Bonawitz N.D."/>
            <person name="Chapple C."/>
            <person name="Cheng C."/>
            <person name="Correa L.G."/>
            <person name="Dacre M."/>
            <person name="DeBarry J."/>
            <person name="Dreyer I."/>
            <person name="Elias M."/>
            <person name="Engstrom E.M."/>
            <person name="Estelle M."/>
            <person name="Feng L."/>
            <person name="Finet C."/>
            <person name="Floyd S.K."/>
            <person name="Frommer W.B."/>
            <person name="Fujita T."/>
            <person name="Gramzow L."/>
            <person name="Gutensohn M."/>
            <person name="Harholt J."/>
            <person name="Hattori M."/>
            <person name="Heyl A."/>
            <person name="Hirai T."/>
            <person name="Hiwatashi Y."/>
            <person name="Ishikawa M."/>
            <person name="Iwata M."/>
            <person name="Karol K.G."/>
            <person name="Koehler B."/>
            <person name="Kolukisaoglu U."/>
            <person name="Kubo M."/>
            <person name="Kurata T."/>
            <person name="Lalonde S."/>
            <person name="Li K."/>
            <person name="Li Y."/>
            <person name="Litt A."/>
            <person name="Lyons E."/>
            <person name="Manning G."/>
            <person name="Maruyama T."/>
            <person name="Michael T.P."/>
            <person name="Mikami K."/>
            <person name="Miyazaki S."/>
            <person name="Morinaga S."/>
            <person name="Murata T."/>
            <person name="Mueller-Roeber B."/>
            <person name="Nelson D.R."/>
            <person name="Obara M."/>
            <person name="Oguri Y."/>
            <person name="Olmstead R.G."/>
            <person name="Onodera N."/>
            <person name="Petersen B.L."/>
            <person name="Pils B."/>
            <person name="Prigge M."/>
            <person name="Rensing S.A."/>
            <person name="Riano-Pachon D.M."/>
            <person name="Roberts A.W."/>
            <person name="Sato Y."/>
            <person name="Scheller H.V."/>
            <person name="Schulz B."/>
            <person name="Schulz C."/>
            <person name="Shakirov E.V."/>
            <person name="Shibagaki N."/>
            <person name="Shinohara N."/>
            <person name="Shippen D.E."/>
            <person name="Soerensen I."/>
            <person name="Sotooka R."/>
            <person name="Sugimoto N."/>
            <person name="Sugita M."/>
            <person name="Sumikawa N."/>
            <person name="Tanurdzic M."/>
            <person name="Theissen G."/>
            <person name="Ulvskov P."/>
            <person name="Wakazuki S."/>
            <person name="Weng J.K."/>
            <person name="Willats W.W."/>
            <person name="Wipf D."/>
            <person name="Wolf P.G."/>
            <person name="Yang L."/>
            <person name="Zimmer A.D."/>
            <person name="Zhu Q."/>
            <person name="Mitros T."/>
            <person name="Hellsten U."/>
            <person name="Loque D."/>
            <person name="Otillar R."/>
            <person name="Salamov A."/>
            <person name="Schmutz J."/>
            <person name="Shapiro H."/>
            <person name="Lindquist E."/>
            <person name="Lucas S."/>
            <person name="Rokhsar D."/>
            <person name="Grigoriev I.V."/>
        </authorList>
    </citation>
    <scope>NUCLEOTIDE SEQUENCE [LARGE SCALE GENOMIC DNA]</scope>
</reference>
<protein>
    <recommendedName>
        <fullName>LIMR family protein SELMODRAFT_432210</fullName>
    </recommendedName>
</protein>
<accession>D8TFB0</accession>
<keyword id="KW-0472">Membrane</keyword>
<keyword id="KW-1185">Reference proteome</keyword>
<keyword id="KW-0812">Transmembrane</keyword>
<keyword id="KW-1133">Transmembrane helix</keyword>
<feature type="chain" id="PRO_0000417754" description="LIMR family protein SELMODRAFT_432210">
    <location>
        <begin position="1"/>
        <end position="321"/>
    </location>
</feature>
<feature type="transmembrane region" description="Helical" evidence="1">
    <location>
        <begin position="28"/>
        <end position="48"/>
    </location>
</feature>
<feature type="transmembrane region" description="Helical" evidence="1">
    <location>
        <begin position="116"/>
        <end position="133"/>
    </location>
</feature>
<feature type="transmembrane region" description="Helical" evidence="1">
    <location>
        <begin position="139"/>
        <end position="159"/>
    </location>
</feature>
<feature type="transmembrane region" description="Helical" evidence="1">
    <location>
        <begin position="240"/>
        <end position="260"/>
    </location>
</feature>
<feature type="transmembrane region" description="Helical" evidence="1">
    <location>
        <begin position="284"/>
        <end position="304"/>
    </location>
</feature>
<evidence type="ECO:0000255" key="1"/>
<evidence type="ECO:0000305" key="2"/>
<sequence>MLPADAVNRHSCEKNLYVGVCKLTLPMKQLWWVVYIIDTVLVYLVIPFRDLLLRERPGEDCDTKGKERPLVGGDTPHSLLPPLGNSLSYADFTVKRPGRWRSPMILAHSMQRLRACFSLSSNVTLMLIRLDLWLKLRGLCVFPTYVIALSILFTMFGGVRIATLPLSLIFAFKNRPKCVMALQEATDLAKSSNVLKKVTLGLQREERGGKKGRKLRKNVKKVQQEDTSWALTVLFYLAKLVFGILGLALSIIWLLHILVFMLVNPPAFPFLNQVFIQLDSAGDLLGTTPFAIFCYYFVMSVISGEMHLGMKLLFLSIHPMK</sequence>
<organism>
    <name type="scientific">Selaginella moellendorffii</name>
    <name type="common">Spikemoss</name>
    <dbReference type="NCBI Taxonomy" id="88036"/>
    <lineage>
        <taxon>Eukaryota</taxon>
        <taxon>Viridiplantae</taxon>
        <taxon>Streptophyta</taxon>
        <taxon>Embryophyta</taxon>
        <taxon>Tracheophyta</taxon>
        <taxon>Lycopodiopsida</taxon>
        <taxon>Selaginellales</taxon>
        <taxon>Selaginellaceae</taxon>
        <taxon>Selaginella</taxon>
    </lineage>
</organism>
<comment type="subcellular location">
    <subcellularLocation>
        <location evidence="2">Membrane</location>
        <topology evidence="2">Multi-pass membrane protein</topology>
    </subcellularLocation>
</comment>
<comment type="similarity">
    <text evidence="2">Belongs to the LIMR family.</text>
</comment>
<dbReference type="EMBL" id="GL377772">
    <property type="protein sequence ID" value="EFJ04658.1"/>
    <property type="molecule type" value="Genomic_DNA"/>
</dbReference>
<dbReference type="RefSeq" id="XP_002994279.1">
    <property type="nucleotide sequence ID" value="XM_002994233.1"/>
</dbReference>
<dbReference type="STRING" id="88036.D8TFB0"/>
<dbReference type="EnsemblPlants" id="EFJ04658">
    <property type="protein sequence ID" value="EFJ04658"/>
    <property type="gene ID" value="SELMODRAFT_432210"/>
</dbReference>
<dbReference type="Gramene" id="EFJ04658">
    <property type="protein sequence ID" value="EFJ04658"/>
    <property type="gene ID" value="SELMODRAFT_432210"/>
</dbReference>
<dbReference type="KEGG" id="smo:SELMODRAFT_432210"/>
<dbReference type="eggNOG" id="ENOG502QPKQ">
    <property type="taxonomic scope" value="Eukaryota"/>
</dbReference>
<dbReference type="HOGENOM" id="CLU_026480_1_0_1"/>
<dbReference type="InParanoid" id="D8TFB0"/>
<dbReference type="Proteomes" id="UP000001514">
    <property type="component" value="Unassembled WGS sequence"/>
</dbReference>
<dbReference type="GO" id="GO:0016020">
    <property type="term" value="C:membrane"/>
    <property type="evidence" value="ECO:0007669"/>
    <property type="project" value="UniProtKB-SubCell"/>
</dbReference>
<dbReference type="InterPro" id="IPR006876">
    <property type="entry name" value="LMBR1-like_membr_prot"/>
</dbReference>
<dbReference type="PANTHER" id="PTHR31652">
    <property type="entry name" value="LIMR FAMILY PROTEIN DDB_G0283707-RELATED"/>
    <property type="match status" value="1"/>
</dbReference>
<dbReference type="PANTHER" id="PTHR31652:SF0">
    <property type="entry name" value="LIMR FAMILY PROTEIN DDB_G0283707-RELATED"/>
    <property type="match status" value="1"/>
</dbReference>
<dbReference type="Pfam" id="PF04791">
    <property type="entry name" value="LMBR1"/>
    <property type="match status" value="1"/>
</dbReference>
<gene>
    <name type="ORF">SELMODRAFT_432210</name>
</gene>
<name>LMBD1_SELML</name>